<comment type="function">
    <text evidence="1">This enzyme is involved in nucleotide metabolism: it produces dUMP, the immediate precursor of thymidine nucleotides and it decreases the intracellular concentration of dUTP so that uracil cannot be incorporated into DNA.</text>
</comment>
<comment type="catalytic activity">
    <reaction evidence="1">
        <text>dUTP + H2O = dUMP + diphosphate + H(+)</text>
        <dbReference type="Rhea" id="RHEA:10248"/>
        <dbReference type="ChEBI" id="CHEBI:15377"/>
        <dbReference type="ChEBI" id="CHEBI:15378"/>
        <dbReference type="ChEBI" id="CHEBI:33019"/>
        <dbReference type="ChEBI" id="CHEBI:61555"/>
        <dbReference type="ChEBI" id="CHEBI:246422"/>
        <dbReference type="EC" id="3.6.1.23"/>
    </reaction>
</comment>
<comment type="cofactor">
    <cofactor evidence="1">
        <name>Mg(2+)</name>
        <dbReference type="ChEBI" id="CHEBI:18420"/>
    </cofactor>
</comment>
<comment type="pathway">
    <text evidence="1">Pyrimidine metabolism; dUMP biosynthesis; dUMP from dCTP (dUTP route): step 2/2.</text>
</comment>
<comment type="similarity">
    <text evidence="1">Belongs to the dUTPase family.</text>
</comment>
<evidence type="ECO:0000255" key="1">
    <source>
        <dbReference type="HAMAP-Rule" id="MF_00116"/>
    </source>
</evidence>
<protein>
    <recommendedName>
        <fullName evidence="1">Deoxyuridine 5'-triphosphate nucleotidohydrolase</fullName>
        <shortName evidence="1">dUTPase</shortName>
        <ecNumber evidence="1">3.6.1.23</ecNumber>
    </recommendedName>
    <alternativeName>
        <fullName evidence="1">dUTP pyrophosphatase</fullName>
    </alternativeName>
</protein>
<keyword id="KW-0378">Hydrolase</keyword>
<keyword id="KW-0460">Magnesium</keyword>
<keyword id="KW-0479">Metal-binding</keyword>
<keyword id="KW-0546">Nucleotide metabolism</keyword>
<name>DUT_SHESM</name>
<feature type="chain" id="PRO_1000015519" description="Deoxyuridine 5'-triphosphate nucleotidohydrolase">
    <location>
        <begin position="1"/>
        <end position="152"/>
    </location>
</feature>
<feature type="binding site" evidence="1">
    <location>
        <begin position="71"/>
        <end position="73"/>
    </location>
    <ligand>
        <name>substrate</name>
    </ligand>
</feature>
<feature type="binding site" evidence="1">
    <location>
        <position position="84"/>
    </location>
    <ligand>
        <name>substrate</name>
    </ligand>
</feature>
<feature type="binding site" evidence="1">
    <location>
        <begin position="88"/>
        <end position="90"/>
    </location>
    <ligand>
        <name>substrate</name>
    </ligand>
</feature>
<feature type="binding site" evidence="1">
    <location>
        <position position="98"/>
    </location>
    <ligand>
        <name>substrate</name>
    </ligand>
</feature>
<accession>Q0HE54</accession>
<dbReference type="EC" id="3.6.1.23" evidence="1"/>
<dbReference type="EMBL" id="CP000446">
    <property type="protein sequence ID" value="ABI40663.1"/>
    <property type="molecule type" value="Genomic_DNA"/>
</dbReference>
<dbReference type="RefSeq" id="WP_011624324.1">
    <property type="nucleotide sequence ID" value="NC_008321.1"/>
</dbReference>
<dbReference type="SMR" id="Q0HE54"/>
<dbReference type="GeneID" id="94729703"/>
<dbReference type="KEGG" id="she:Shewmr4_3599"/>
<dbReference type="HOGENOM" id="CLU_068508_1_1_6"/>
<dbReference type="UniPathway" id="UPA00610">
    <property type="reaction ID" value="UER00666"/>
</dbReference>
<dbReference type="GO" id="GO:0004170">
    <property type="term" value="F:dUTP diphosphatase activity"/>
    <property type="evidence" value="ECO:0007669"/>
    <property type="project" value="UniProtKB-UniRule"/>
</dbReference>
<dbReference type="GO" id="GO:0000287">
    <property type="term" value="F:magnesium ion binding"/>
    <property type="evidence" value="ECO:0007669"/>
    <property type="project" value="UniProtKB-UniRule"/>
</dbReference>
<dbReference type="GO" id="GO:0006226">
    <property type="term" value="P:dUMP biosynthetic process"/>
    <property type="evidence" value="ECO:0007669"/>
    <property type="project" value="UniProtKB-UniRule"/>
</dbReference>
<dbReference type="GO" id="GO:0046081">
    <property type="term" value="P:dUTP catabolic process"/>
    <property type="evidence" value="ECO:0007669"/>
    <property type="project" value="InterPro"/>
</dbReference>
<dbReference type="CDD" id="cd07557">
    <property type="entry name" value="trimeric_dUTPase"/>
    <property type="match status" value="1"/>
</dbReference>
<dbReference type="FunFam" id="2.70.40.10:FF:000002">
    <property type="entry name" value="dUTP diphosphatase"/>
    <property type="match status" value="1"/>
</dbReference>
<dbReference type="Gene3D" id="2.70.40.10">
    <property type="match status" value="1"/>
</dbReference>
<dbReference type="HAMAP" id="MF_00116">
    <property type="entry name" value="dUTPase_bact"/>
    <property type="match status" value="1"/>
</dbReference>
<dbReference type="InterPro" id="IPR008181">
    <property type="entry name" value="dUTPase"/>
</dbReference>
<dbReference type="InterPro" id="IPR029054">
    <property type="entry name" value="dUTPase-like"/>
</dbReference>
<dbReference type="InterPro" id="IPR036157">
    <property type="entry name" value="dUTPase-like_sf"/>
</dbReference>
<dbReference type="InterPro" id="IPR033704">
    <property type="entry name" value="dUTPase_trimeric"/>
</dbReference>
<dbReference type="NCBIfam" id="TIGR00576">
    <property type="entry name" value="dut"/>
    <property type="match status" value="1"/>
</dbReference>
<dbReference type="NCBIfam" id="NF001862">
    <property type="entry name" value="PRK00601.1"/>
    <property type="match status" value="1"/>
</dbReference>
<dbReference type="PANTHER" id="PTHR11241">
    <property type="entry name" value="DEOXYURIDINE 5'-TRIPHOSPHATE NUCLEOTIDOHYDROLASE"/>
    <property type="match status" value="1"/>
</dbReference>
<dbReference type="PANTHER" id="PTHR11241:SF0">
    <property type="entry name" value="DEOXYURIDINE 5'-TRIPHOSPHATE NUCLEOTIDOHYDROLASE"/>
    <property type="match status" value="1"/>
</dbReference>
<dbReference type="Pfam" id="PF00692">
    <property type="entry name" value="dUTPase"/>
    <property type="match status" value="1"/>
</dbReference>
<dbReference type="SUPFAM" id="SSF51283">
    <property type="entry name" value="dUTPase-like"/>
    <property type="match status" value="1"/>
</dbReference>
<gene>
    <name evidence="1" type="primary">dut</name>
    <name type="ordered locus">Shewmr4_3599</name>
</gene>
<sequence length="152" mass="16128">MKTPIELKILDSRIGSEFPLPAYATPGSAGMDLRAMIDTTMTIAPGETQLIPTGIAIHVADPGLAAVILPRSGLGHKHGIVLGNLVGLIDSDYQGPLMVSCWNRSDTPFTLEIGDRLAQLVFVPVVQAQFKLVDEFDSSDRGEGGFGHSGTK</sequence>
<organism>
    <name type="scientific">Shewanella sp. (strain MR-4)</name>
    <dbReference type="NCBI Taxonomy" id="60480"/>
    <lineage>
        <taxon>Bacteria</taxon>
        <taxon>Pseudomonadati</taxon>
        <taxon>Pseudomonadota</taxon>
        <taxon>Gammaproteobacteria</taxon>
        <taxon>Alteromonadales</taxon>
        <taxon>Shewanellaceae</taxon>
        <taxon>Shewanella</taxon>
    </lineage>
</organism>
<reference key="1">
    <citation type="submission" date="2006-08" db="EMBL/GenBank/DDBJ databases">
        <title>Complete sequence of Shewanella sp. MR-4.</title>
        <authorList>
            <consortium name="US DOE Joint Genome Institute"/>
            <person name="Copeland A."/>
            <person name="Lucas S."/>
            <person name="Lapidus A."/>
            <person name="Barry K."/>
            <person name="Detter J.C."/>
            <person name="Glavina del Rio T."/>
            <person name="Hammon N."/>
            <person name="Israni S."/>
            <person name="Dalin E."/>
            <person name="Tice H."/>
            <person name="Pitluck S."/>
            <person name="Kiss H."/>
            <person name="Brettin T."/>
            <person name="Bruce D."/>
            <person name="Han C."/>
            <person name="Tapia R."/>
            <person name="Gilna P."/>
            <person name="Schmutz J."/>
            <person name="Larimer F."/>
            <person name="Land M."/>
            <person name="Hauser L."/>
            <person name="Kyrpides N."/>
            <person name="Mikhailova N."/>
            <person name="Nealson K."/>
            <person name="Konstantinidis K."/>
            <person name="Klappenbach J."/>
            <person name="Tiedje J."/>
            <person name="Richardson P."/>
        </authorList>
    </citation>
    <scope>NUCLEOTIDE SEQUENCE [LARGE SCALE GENOMIC DNA]</scope>
    <source>
        <strain>MR-4</strain>
    </source>
</reference>
<proteinExistence type="inferred from homology"/>